<evidence type="ECO:0000255" key="1">
    <source>
        <dbReference type="HAMAP-Rule" id="MF_03117"/>
    </source>
</evidence>
<evidence type="ECO:0000303" key="2">
    <source>
    </source>
</evidence>
<evidence type="ECO:0000305" key="3"/>
<comment type="function">
    <text evidence="1">Bifunctional enzyme that catalyzes the enolization of 2,3-diketo-5-methylthiopentyl-1-phosphate (DK-MTP-1-P) into the intermediate 2-hydroxy-3-keto-5-methylthiopentenyl-1-phosphate (HK-MTPenyl-1-P), which is then dephosphorylated to form the acireductone 1,2-dihydroxy-3-keto-5-methylthiopentene (DHK-MTPene).</text>
</comment>
<comment type="catalytic activity">
    <reaction evidence="1">
        <text>5-methylsulfanyl-2,3-dioxopentyl phosphate + H2O = 1,2-dihydroxy-5-(methylsulfanyl)pent-1-en-3-one + phosphate</text>
        <dbReference type="Rhea" id="RHEA:21700"/>
        <dbReference type="ChEBI" id="CHEBI:15377"/>
        <dbReference type="ChEBI" id="CHEBI:43474"/>
        <dbReference type="ChEBI" id="CHEBI:49252"/>
        <dbReference type="ChEBI" id="CHEBI:58828"/>
        <dbReference type="EC" id="3.1.3.77"/>
    </reaction>
</comment>
<comment type="cofactor">
    <cofactor evidence="1">
        <name>Mg(2+)</name>
        <dbReference type="ChEBI" id="CHEBI:18420"/>
    </cofactor>
    <text evidence="1">Binds 1 Mg(2+) ion per subunit.</text>
</comment>
<comment type="pathway">
    <text evidence="1">Amino-acid biosynthesis; L-methionine biosynthesis via salvage pathway; L-methionine from S-methyl-5-thio-alpha-D-ribose 1-phosphate: step 3/6.</text>
</comment>
<comment type="pathway">
    <text evidence="1">Amino-acid biosynthesis; L-methionine biosynthesis via salvage pathway; L-methionine from S-methyl-5-thio-alpha-D-ribose 1-phosphate: step 4/6.</text>
</comment>
<comment type="subunit">
    <text evidence="1">Monomer.</text>
</comment>
<comment type="subcellular location">
    <subcellularLocation>
        <location evidence="1">Cytoplasm</location>
    </subcellularLocation>
    <subcellularLocation>
        <location evidence="1">Nucleus</location>
    </subcellularLocation>
</comment>
<comment type="alternative products">
    <event type="alternative splicing"/>
    <isoform>
        <id>Q8BGB7-1</id>
        <name>1</name>
        <sequence type="displayed"/>
    </isoform>
    <isoform>
        <id>Q8BGB7-2</id>
        <name>2</name>
        <sequence type="described" ref="VSP_021161"/>
    </isoform>
</comment>
<comment type="similarity">
    <text evidence="1">Belongs to the HAD-like hydrolase superfamily. MasA/MtnC family.</text>
</comment>
<comment type="sequence caution" evidence="3">
    <conflict type="frameshift">
        <sequence resource="EMBL-CDS" id="BAE30883"/>
    </conflict>
</comment>
<feature type="chain" id="PRO_0000254008" description="Enolase-phosphatase E1">
    <location>
        <begin position="1"/>
        <end position="257"/>
    </location>
</feature>
<feature type="binding site" evidence="1">
    <location>
        <position position="16"/>
    </location>
    <ligand>
        <name>Mg(2+)</name>
        <dbReference type="ChEBI" id="CHEBI:18420"/>
    </ligand>
</feature>
<feature type="binding site" evidence="1">
    <location>
        <position position="18"/>
    </location>
    <ligand>
        <name>Mg(2+)</name>
        <dbReference type="ChEBI" id="CHEBI:18420"/>
    </ligand>
</feature>
<feature type="binding site" evidence="1">
    <location>
        <begin position="150"/>
        <end position="151"/>
    </location>
    <ligand>
        <name>substrate</name>
    </ligand>
</feature>
<feature type="binding site" evidence="1">
    <location>
        <position position="184"/>
    </location>
    <ligand>
        <name>substrate</name>
    </ligand>
</feature>
<feature type="binding site" evidence="1">
    <location>
        <position position="209"/>
    </location>
    <ligand>
        <name>Mg(2+)</name>
        <dbReference type="ChEBI" id="CHEBI:18420"/>
    </ligand>
</feature>
<feature type="splice variant" id="VSP_021161" description="In isoform 2." evidence="2">
    <location>
        <begin position="55"/>
        <end position="85"/>
    </location>
</feature>
<feature type="sequence conflict" description="In Ref. 2; AAH21429." evidence="3" ref="2">
    <original>V</original>
    <variation>I</variation>
    <location>
        <position position="56"/>
    </location>
</feature>
<feature type="sequence conflict" description="In Ref. 2; AAH21429." evidence="3" ref="2">
    <original>P</original>
    <variation>L</variation>
    <location>
        <position position="74"/>
    </location>
</feature>
<feature type="sequence conflict" description="In Ref. 1; BAB26606." evidence="3" ref="1">
    <original>G</original>
    <variation>R</variation>
    <location>
        <position position="152"/>
    </location>
</feature>
<feature type="sequence conflict" description="In Ref. 1; BAE35014." evidence="3" ref="1">
    <original>T</original>
    <variation>N</variation>
    <location>
        <position position="236"/>
    </location>
</feature>
<name>ENOPH_MOUSE</name>
<dbReference type="EC" id="3.1.3.77" evidence="1"/>
<dbReference type="EMBL" id="AK009954">
    <property type="protein sequence ID" value="BAB26606.1"/>
    <property type="molecule type" value="mRNA"/>
</dbReference>
<dbReference type="EMBL" id="AK079062">
    <property type="protein sequence ID" value="BAC37520.1"/>
    <property type="molecule type" value="mRNA"/>
</dbReference>
<dbReference type="EMBL" id="AK080714">
    <property type="protein sequence ID" value="BAC37988.1"/>
    <property type="molecule type" value="mRNA"/>
</dbReference>
<dbReference type="EMBL" id="AK082747">
    <property type="protein sequence ID" value="BAC38597.1"/>
    <property type="molecule type" value="mRNA"/>
</dbReference>
<dbReference type="EMBL" id="AK152021">
    <property type="protein sequence ID" value="BAE30883.1"/>
    <property type="status" value="ALT_FRAME"/>
    <property type="molecule type" value="mRNA"/>
</dbReference>
<dbReference type="EMBL" id="AK159356">
    <property type="protein sequence ID" value="BAE35014.1"/>
    <property type="molecule type" value="mRNA"/>
</dbReference>
<dbReference type="EMBL" id="AK167575">
    <property type="protein sequence ID" value="BAE39638.1"/>
    <property type="molecule type" value="mRNA"/>
</dbReference>
<dbReference type="EMBL" id="AK168696">
    <property type="protein sequence ID" value="BAE40540.1"/>
    <property type="molecule type" value="mRNA"/>
</dbReference>
<dbReference type="EMBL" id="BC021429">
    <property type="protein sequence ID" value="AAH21429.1"/>
    <property type="molecule type" value="mRNA"/>
</dbReference>
<dbReference type="CCDS" id="CCDS39183.1">
    <molecule id="Q8BGB7-1"/>
</dbReference>
<dbReference type="RefSeq" id="NP_001156507.1">
    <molecule id="Q8BGB7-1"/>
    <property type="nucleotide sequence ID" value="NM_001163035.1"/>
</dbReference>
<dbReference type="RefSeq" id="NP_080697.2">
    <molecule id="Q8BGB7-1"/>
    <property type="nucleotide sequence ID" value="NM_026421.3"/>
</dbReference>
<dbReference type="SMR" id="Q8BGB7"/>
<dbReference type="BioGRID" id="212497">
    <property type="interactions" value="1"/>
</dbReference>
<dbReference type="FunCoup" id="Q8BGB7">
    <property type="interactions" value="3473"/>
</dbReference>
<dbReference type="STRING" id="10090.ENSMUSP00000129704"/>
<dbReference type="iPTMnet" id="Q8BGB7"/>
<dbReference type="PhosphoSitePlus" id="Q8BGB7"/>
<dbReference type="SwissPalm" id="Q8BGB7"/>
<dbReference type="jPOST" id="Q8BGB7"/>
<dbReference type="PaxDb" id="10090-ENSMUSP00000129704"/>
<dbReference type="PeptideAtlas" id="Q8BGB7"/>
<dbReference type="ProteomicsDB" id="277791">
    <molecule id="Q8BGB7-1"/>
</dbReference>
<dbReference type="ProteomicsDB" id="277792">
    <molecule id="Q8BGB7-2"/>
</dbReference>
<dbReference type="Pumba" id="Q8BGB7"/>
<dbReference type="Antibodypedia" id="25049">
    <property type="antibodies" value="177 antibodies from 24 providers"/>
</dbReference>
<dbReference type="DNASU" id="67870"/>
<dbReference type="Ensembl" id="ENSMUST00000031268.8">
    <molecule id="Q8BGB7-1"/>
    <property type="protein sequence ID" value="ENSMUSP00000031268.7"/>
    <property type="gene ID" value="ENSMUSG00000029326.14"/>
</dbReference>
<dbReference type="Ensembl" id="ENSMUST00000169390.8">
    <molecule id="Q8BGB7-1"/>
    <property type="protein sequence ID" value="ENSMUSP00000129704.2"/>
    <property type="gene ID" value="ENSMUSG00000029326.14"/>
</dbReference>
<dbReference type="GeneID" id="67870"/>
<dbReference type="KEGG" id="mmu:67870"/>
<dbReference type="UCSC" id="uc008yha.2">
    <molecule id="Q8BGB7-1"/>
    <property type="organism name" value="mouse"/>
</dbReference>
<dbReference type="AGR" id="MGI:1915120"/>
<dbReference type="CTD" id="58478"/>
<dbReference type="MGI" id="MGI:1915120">
    <property type="gene designation" value="Enoph1"/>
</dbReference>
<dbReference type="VEuPathDB" id="HostDB:ENSMUSG00000029326"/>
<dbReference type="eggNOG" id="KOG2630">
    <property type="taxonomic scope" value="Eukaryota"/>
</dbReference>
<dbReference type="GeneTree" id="ENSGT00440000039914"/>
<dbReference type="HOGENOM" id="CLU_023273_0_0_1"/>
<dbReference type="InParanoid" id="Q8BGB7"/>
<dbReference type="OMA" id="LQGMVWE"/>
<dbReference type="OrthoDB" id="272500at2759"/>
<dbReference type="PhylomeDB" id="Q8BGB7"/>
<dbReference type="TreeFam" id="TF105939"/>
<dbReference type="Reactome" id="R-MMU-1237112">
    <property type="pathway name" value="Methionine salvage pathway"/>
</dbReference>
<dbReference type="UniPathway" id="UPA00904">
    <property type="reaction ID" value="UER00876"/>
</dbReference>
<dbReference type="UniPathway" id="UPA00904">
    <property type="reaction ID" value="UER00877"/>
</dbReference>
<dbReference type="BioGRID-ORCS" id="67870">
    <property type="hits" value="4 hits in 79 CRISPR screens"/>
</dbReference>
<dbReference type="ChiTaRS" id="Enoph1">
    <property type="organism name" value="mouse"/>
</dbReference>
<dbReference type="PRO" id="PR:Q8BGB7"/>
<dbReference type="Proteomes" id="UP000000589">
    <property type="component" value="Chromosome 5"/>
</dbReference>
<dbReference type="RNAct" id="Q8BGB7">
    <property type="molecule type" value="protein"/>
</dbReference>
<dbReference type="Bgee" id="ENSMUSG00000029326">
    <property type="expression patterns" value="Expressed in condyle and 269 other cell types or tissues"/>
</dbReference>
<dbReference type="GO" id="GO:0005737">
    <property type="term" value="C:cytoplasm"/>
    <property type="evidence" value="ECO:0007669"/>
    <property type="project" value="UniProtKB-SubCell"/>
</dbReference>
<dbReference type="GO" id="GO:0005634">
    <property type="term" value="C:nucleus"/>
    <property type="evidence" value="ECO:0007669"/>
    <property type="project" value="UniProtKB-SubCell"/>
</dbReference>
<dbReference type="GO" id="GO:0043874">
    <property type="term" value="F:acireductone synthase activity"/>
    <property type="evidence" value="ECO:0000250"/>
    <property type="project" value="UniProtKB"/>
</dbReference>
<dbReference type="GO" id="GO:0000287">
    <property type="term" value="F:magnesium ion binding"/>
    <property type="evidence" value="ECO:0007669"/>
    <property type="project" value="UniProtKB-UniRule"/>
</dbReference>
<dbReference type="GO" id="GO:0019509">
    <property type="term" value="P:L-methionine salvage from methylthioadenosine"/>
    <property type="evidence" value="ECO:0000250"/>
    <property type="project" value="UniProtKB"/>
</dbReference>
<dbReference type="CDD" id="cd01629">
    <property type="entry name" value="HAD_EP"/>
    <property type="match status" value="1"/>
</dbReference>
<dbReference type="FunFam" id="1.10.720.60:FF:000002">
    <property type="entry name" value="Enolase-phosphatase E1"/>
    <property type="match status" value="1"/>
</dbReference>
<dbReference type="FunFam" id="3.40.50.1000:FF:000102">
    <property type="entry name" value="Enolase-phosphatase E1"/>
    <property type="match status" value="1"/>
</dbReference>
<dbReference type="Gene3D" id="1.10.720.60">
    <property type="match status" value="1"/>
</dbReference>
<dbReference type="Gene3D" id="3.40.50.1000">
    <property type="entry name" value="HAD superfamily/HAD-like"/>
    <property type="match status" value="1"/>
</dbReference>
<dbReference type="HAMAP" id="MF_01681">
    <property type="entry name" value="Salvage_MtnC"/>
    <property type="match status" value="1"/>
</dbReference>
<dbReference type="HAMAP" id="MF_03117">
    <property type="entry name" value="Salvage_MtnC_euk"/>
    <property type="match status" value="1"/>
</dbReference>
<dbReference type="InterPro" id="IPR023943">
    <property type="entry name" value="Enolase-ppase_E1"/>
</dbReference>
<dbReference type="InterPro" id="IPR027511">
    <property type="entry name" value="ENOPH1_eukaryotes"/>
</dbReference>
<dbReference type="InterPro" id="IPR036412">
    <property type="entry name" value="HAD-like_sf"/>
</dbReference>
<dbReference type="InterPro" id="IPR006439">
    <property type="entry name" value="HAD-SF_hydro_IA"/>
</dbReference>
<dbReference type="InterPro" id="IPR023214">
    <property type="entry name" value="HAD_sf"/>
</dbReference>
<dbReference type="NCBIfam" id="TIGR01691">
    <property type="entry name" value="enolase-ppase"/>
    <property type="match status" value="1"/>
</dbReference>
<dbReference type="NCBIfam" id="TIGR01549">
    <property type="entry name" value="HAD-SF-IA-v1"/>
    <property type="match status" value="1"/>
</dbReference>
<dbReference type="PANTHER" id="PTHR20371">
    <property type="entry name" value="ENOLASE-PHOSPHATASE E1"/>
    <property type="match status" value="1"/>
</dbReference>
<dbReference type="PANTHER" id="PTHR20371:SF1">
    <property type="entry name" value="ENOLASE-PHOSPHATASE E1"/>
    <property type="match status" value="1"/>
</dbReference>
<dbReference type="Pfam" id="PF00702">
    <property type="entry name" value="Hydrolase"/>
    <property type="match status" value="1"/>
</dbReference>
<dbReference type="SFLD" id="SFLDG01133">
    <property type="entry name" value="C1.5.4:_Enolase-phosphatase_Li"/>
    <property type="match status" value="1"/>
</dbReference>
<dbReference type="SFLD" id="SFLDF00044">
    <property type="entry name" value="enolase-phosphatase"/>
    <property type="match status" value="1"/>
</dbReference>
<dbReference type="SUPFAM" id="SSF56784">
    <property type="entry name" value="HAD-like"/>
    <property type="match status" value="1"/>
</dbReference>
<proteinExistence type="evidence at protein level"/>
<protein>
    <recommendedName>
        <fullName evidence="1">Enolase-phosphatase E1</fullName>
        <ecNumber evidence="1">3.1.3.77</ecNumber>
    </recommendedName>
    <alternativeName>
        <fullName evidence="1">2,3-diketo-5-methylthio-1-phosphopentane phosphatase</fullName>
    </alternativeName>
    <alternativeName>
        <fullName evidence="1">MASA homolog</fullName>
    </alternativeName>
</protein>
<gene>
    <name type="primary">Enoph1</name>
    <name type="synonym">Masa</name>
</gene>
<keyword id="KW-0025">Alternative splicing</keyword>
<keyword id="KW-0028">Amino-acid biosynthesis</keyword>
<keyword id="KW-0963">Cytoplasm</keyword>
<keyword id="KW-0378">Hydrolase</keyword>
<keyword id="KW-0460">Magnesium</keyword>
<keyword id="KW-0479">Metal-binding</keyword>
<keyword id="KW-0486">Methionine biosynthesis</keyword>
<keyword id="KW-0539">Nucleus</keyword>
<keyword id="KW-1185">Reference proteome</keyword>
<sequence length="257" mass="28600">MVVVSVPAEVTVILLDIEGTTTPIAFVKDVLFPYIKENVKEYLQTHWEEEECQQDVSLLRKQAEEDAHLDGAVPIPVASGSDLQQMIQAVVDNVYWQMSHDRKTTALKQLQGHMWKAAFTAGRMKAEFFADVVPAVRRWREAGMKVYIYSSGSVEAQKLLFGHSTEGDILELIDGHFDTKIGHKVDSESYRKIADSIGCSTNNILFLTDVTVEASAAEEADVHVAVVVRPGNAGLTDDEKTYYNLITSFSELYLPST</sequence>
<accession>Q8BGB7</accession>
<accession>Q3TGK8</accession>
<accession>Q3TXA2</accession>
<accession>Q3U8Y4</accession>
<accession>Q8VC92</accession>
<accession>Q9D6U4</accession>
<organism>
    <name type="scientific">Mus musculus</name>
    <name type="common">Mouse</name>
    <dbReference type="NCBI Taxonomy" id="10090"/>
    <lineage>
        <taxon>Eukaryota</taxon>
        <taxon>Metazoa</taxon>
        <taxon>Chordata</taxon>
        <taxon>Craniata</taxon>
        <taxon>Vertebrata</taxon>
        <taxon>Euteleostomi</taxon>
        <taxon>Mammalia</taxon>
        <taxon>Eutheria</taxon>
        <taxon>Euarchontoglires</taxon>
        <taxon>Glires</taxon>
        <taxon>Rodentia</taxon>
        <taxon>Myomorpha</taxon>
        <taxon>Muroidea</taxon>
        <taxon>Muridae</taxon>
        <taxon>Murinae</taxon>
        <taxon>Mus</taxon>
        <taxon>Mus</taxon>
    </lineage>
</organism>
<reference key="1">
    <citation type="journal article" date="2005" name="Science">
        <title>The transcriptional landscape of the mammalian genome.</title>
        <authorList>
            <person name="Carninci P."/>
            <person name="Kasukawa T."/>
            <person name="Katayama S."/>
            <person name="Gough J."/>
            <person name="Frith M.C."/>
            <person name="Maeda N."/>
            <person name="Oyama R."/>
            <person name="Ravasi T."/>
            <person name="Lenhard B."/>
            <person name="Wells C."/>
            <person name="Kodzius R."/>
            <person name="Shimokawa K."/>
            <person name="Bajic V.B."/>
            <person name="Brenner S.E."/>
            <person name="Batalov S."/>
            <person name="Forrest A.R."/>
            <person name="Zavolan M."/>
            <person name="Davis M.J."/>
            <person name="Wilming L.G."/>
            <person name="Aidinis V."/>
            <person name="Allen J.E."/>
            <person name="Ambesi-Impiombato A."/>
            <person name="Apweiler R."/>
            <person name="Aturaliya R.N."/>
            <person name="Bailey T.L."/>
            <person name="Bansal M."/>
            <person name="Baxter L."/>
            <person name="Beisel K.W."/>
            <person name="Bersano T."/>
            <person name="Bono H."/>
            <person name="Chalk A.M."/>
            <person name="Chiu K.P."/>
            <person name="Choudhary V."/>
            <person name="Christoffels A."/>
            <person name="Clutterbuck D.R."/>
            <person name="Crowe M.L."/>
            <person name="Dalla E."/>
            <person name="Dalrymple B.P."/>
            <person name="de Bono B."/>
            <person name="Della Gatta G."/>
            <person name="di Bernardo D."/>
            <person name="Down T."/>
            <person name="Engstrom P."/>
            <person name="Fagiolini M."/>
            <person name="Faulkner G."/>
            <person name="Fletcher C.F."/>
            <person name="Fukushima T."/>
            <person name="Furuno M."/>
            <person name="Futaki S."/>
            <person name="Gariboldi M."/>
            <person name="Georgii-Hemming P."/>
            <person name="Gingeras T.R."/>
            <person name="Gojobori T."/>
            <person name="Green R.E."/>
            <person name="Gustincich S."/>
            <person name="Harbers M."/>
            <person name="Hayashi Y."/>
            <person name="Hensch T.K."/>
            <person name="Hirokawa N."/>
            <person name="Hill D."/>
            <person name="Huminiecki L."/>
            <person name="Iacono M."/>
            <person name="Ikeo K."/>
            <person name="Iwama A."/>
            <person name="Ishikawa T."/>
            <person name="Jakt M."/>
            <person name="Kanapin A."/>
            <person name="Katoh M."/>
            <person name="Kawasawa Y."/>
            <person name="Kelso J."/>
            <person name="Kitamura H."/>
            <person name="Kitano H."/>
            <person name="Kollias G."/>
            <person name="Krishnan S.P."/>
            <person name="Kruger A."/>
            <person name="Kummerfeld S.K."/>
            <person name="Kurochkin I.V."/>
            <person name="Lareau L.F."/>
            <person name="Lazarevic D."/>
            <person name="Lipovich L."/>
            <person name="Liu J."/>
            <person name="Liuni S."/>
            <person name="McWilliam S."/>
            <person name="Madan Babu M."/>
            <person name="Madera M."/>
            <person name="Marchionni L."/>
            <person name="Matsuda H."/>
            <person name="Matsuzawa S."/>
            <person name="Miki H."/>
            <person name="Mignone F."/>
            <person name="Miyake S."/>
            <person name="Morris K."/>
            <person name="Mottagui-Tabar S."/>
            <person name="Mulder N."/>
            <person name="Nakano N."/>
            <person name="Nakauchi H."/>
            <person name="Ng P."/>
            <person name="Nilsson R."/>
            <person name="Nishiguchi S."/>
            <person name="Nishikawa S."/>
            <person name="Nori F."/>
            <person name="Ohara O."/>
            <person name="Okazaki Y."/>
            <person name="Orlando V."/>
            <person name="Pang K.C."/>
            <person name="Pavan W.J."/>
            <person name="Pavesi G."/>
            <person name="Pesole G."/>
            <person name="Petrovsky N."/>
            <person name="Piazza S."/>
            <person name="Reed J."/>
            <person name="Reid J.F."/>
            <person name="Ring B.Z."/>
            <person name="Ringwald M."/>
            <person name="Rost B."/>
            <person name="Ruan Y."/>
            <person name="Salzberg S.L."/>
            <person name="Sandelin A."/>
            <person name="Schneider C."/>
            <person name="Schoenbach C."/>
            <person name="Sekiguchi K."/>
            <person name="Semple C.A."/>
            <person name="Seno S."/>
            <person name="Sessa L."/>
            <person name="Sheng Y."/>
            <person name="Shibata Y."/>
            <person name="Shimada H."/>
            <person name="Shimada K."/>
            <person name="Silva D."/>
            <person name="Sinclair B."/>
            <person name="Sperling S."/>
            <person name="Stupka E."/>
            <person name="Sugiura K."/>
            <person name="Sultana R."/>
            <person name="Takenaka Y."/>
            <person name="Taki K."/>
            <person name="Tammoja K."/>
            <person name="Tan S.L."/>
            <person name="Tang S."/>
            <person name="Taylor M.S."/>
            <person name="Tegner J."/>
            <person name="Teichmann S.A."/>
            <person name="Ueda H.R."/>
            <person name="van Nimwegen E."/>
            <person name="Verardo R."/>
            <person name="Wei C.L."/>
            <person name="Yagi K."/>
            <person name="Yamanishi H."/>
            <person name="Zabarovsky E."/>
            <person name="Zhu S."/>
            <person name="Zimmer A."/>
            <person name="Hide W."/>
            <person name="Bult C."/>
            <person name="Grimmond S.M."/>
            <person name="Teasdale R.D."/>
            <person name="Liu E.T."/>
            <person name="Brusic V."/>
            <person name="Quackenbush J."/>
            <person name="Wahlestedt C."/>
            <person name="Mattick J.S."/>
            <person name="Hume D.A."/>
            <person name="Kai C."/>
            <person name="Sasaki D."/>
            <person name="Tomaru Y."/>
            <person name="Fukuda S."/>
            <person name="Kanamori-Katayama M."/>
            <person name="Suzuki M."/>
            <person name="Aoki J."/>
            <person name="Arakawa T."/>
            <person name="Iida J."/>
            <person name="Imamura K."/>
            <person name="Itoh M."/>
            <person name="Kato T."/>
            <person name="Kawaji H."/>
            <person name="Kawagashira N."/>
            <person name="Kawashima T."/>
            <person name="Kojima M."/>
            <person name="Kondo S."/>
            <person name="Konno H."/>
            <person name="Nakano K."/>
            <person name="Ninomiya N."/>
            <person name="Nishio T."/>
            <person name="Okada M."/>
            <person name="Plessy C."/>
            <person name="Shibata K."/>
            <person name="Shiraki T."/>
            <person name="Suzuki S."/>
            <person name="Tagami M."/>
            <person name="Waki K."/>
            <person name="Watahiki A."/>
            <person name="Okamura-Oho Y."/>
            <person name="Suzuki H."/>
            <person name="Kawai J."/>
            <person name="Hayashizaki Y."/>
        </authorList>
    </citation>
    <scope>NUCLEOTIDE SEQUENCE [LARGE SCALE MRNA] (ISOFORMS 1 AND 2)</scope>
    <source>
        <strain>C57BL/6J</strain>
        <tissue>Bone marrow macrophage</tissue>
        <tissue>Diencephalon</tissue>
        <tissue>Embryonic kidney</tissue>
        <tissue>Osteoclast</tissue>
        <tissue>Placenta</tissue>
        <tissue>Retina</tissue>
        <tissue>Tongue</tissue>
    </source>
</reference>
<reference key="2">
    <citation type="journal article" date="2004" name="Genome Res.">
        <title>The status, quality, and expansion of the NIH full-length cDNA project: the Mammalian Gene Collection (MGC).</title>
        <authorList>
            <consortium name="The MGC Project Team"/>
        </authorList>
    </citation>
    <scope>NUCLEOTIDE SEQUENCE [LARGE SCALE MRNA] (ISOFORM 1)</scope>
    <source>
        <strain>FVB/N</strain>
        <tissue>Mammary gland</tissue>
    </source>
</reference>
<reference key="3">
    <citation type="journal article" date="2010" name="Cell">
        <title>A tissue-specific atlas of mouse protein phosphorylation and expression.</title>
        <authorList>
            <person name="Huttlin E.L."/>
            <person name="Jedrychowski M.P."/>
            <person name="Elias J.E."/>
            <person name="Goswami T."/>
            <person name="Rad R."/>
            <person name="Beausoleil S.A."/>
            <person name="Villen J."/>
            <person name="Haas W."/>
            <person name="Sowa M.E."/>
            <person name="Gygi S.P."/>
        </authorList>
    </citation>
    <scope>IDENTIFICATION BY MASS SPECTROMETRY [LARGE SCALE ANALYSIS]</scope>
    <source>
        <tissue>Brain</tissue>
        <tissue>Heart</tissue>
        <tissue>Kidney</tissue>
        <tissue>Liver</tissue>
        <tissue>Lung</tissue>
        <tissue>Pancreas</tissue>
        <tissue>Spleen</tissue>
        <tissue>Testis</tissue>
    </source>
</reference>